<sequence>MGRYRGPRLRIIRRLGDLPLFTKKKPHIASKRLPLGHPVRKIKRRPSIYGLRLLAKQRCCYSYGLRDYQLKNYIKKARNAQGDPIKNLIFLLESRLDSKIYRSGIVSTMAAARQLITHGHVLVDNIKITIPSYSCNESQILDYKNTKLTSELIEKIKLSFNPIYVLEYYAIKL</sequence>
<accession>Q2EEX1</accession>
<comment type="function">
    <text evidence="1">One of the primary rRNA binding proteins, it binds directly to 16S rRNA where it nucleates assembly of the body of the 30S subunit.</text>
</comment>
<comment type="function">
    <text evidence="1">With S5 and S12 plays an important role in translational accuracy.</text>
</comment>
<comment type="subunit">
    <text evidence="1">Part of the 30S ribosomal subunit. Contacts protein S5. The interaction surface between S4 and S5 is involved in control of translational fidelity (By similarity).</text>
</comment>
<comment type="subcellular location">
    <subcellularLocation>
        <location>Plastid</location>
    </subcellularLocation>
</comment>
<comment type="similarity">
    <text evidence="3">Belongs to the universal ribosomal protein uS4 family.</text>
</comment>
<geneLocation type="non-photosynthetic plastid"/>
<feature type="chain" id="PRO_0000293427" description="Small ribosomal subunit protein uS4c">
    <location>
        <begin position="1"/>
        <end position="173"/>
    </location>
</feature>
<feature type="domain" description="S4 RNA-binding" evidence="2">
    <location>
        <begin position="94"/>
        <end position="155"/>
    </location>
</feature>
<proteinExistence type="inferred from homology"/>
<organism>
    <name type="scientific">Helicosporidium sp. subsp. Simulium jonesii</name>
    <name type="common">Green alga</name>
    <dbReference type="NCBI Taxonomy" id="145475"/>
    <lineage>
        <taxon>Eukaryota</taxon>
        <taxon>Viridiplantae</taxon>
        <taxon>Chlorophyta</taxon>
        <taxon>core chlorophytes</taxon>
        <taxon>Trebouxiophyceae</taxon>
        <taxon>Chlorellales</taxon>
        <taxon>Chlorellaceae</taxon>
        <taxon>Helicosporidium</taxon>
    </lineage>
</organism>
<protein>
    <recommendedName>
        <fullName evidence="3">Small ribosomal subunit protein uS4c</fullName>
    </recommendedName>
    <alternativeName>
        <fullName>Plastid 30S ribosomal protein S4</fullName>
    </alternativeName>
</protein>
<dbReference type="EMBL" id="DQ398104">
    <property type="protein sequence ID" value="ABD33971.1"/>
    <property type="molecule type" value="Genomic_DNA"/>
</dbReference>
<dbReference type="RefSeq" id="YP_635923.1">
    <property type="nucleotide sequence ID" value="NC_008100.1"/>
</dbReference>
<dbReference type="SMR" id="Q2EEX1"/>
<dbReference type="GeneID" id="4100443"/>
<dbReference type="GO" id="GO:0009536">
    <property type="term" value="C:plastid"/>
    <property type="evidence" value="ECO:0007669"/>
    <property type="project" value="UniProtKB-SubCell"/>
</dbReference>
<dbReference type="GO" id="GO:0015935">
    <property type="term" value="C:small ribosomal subunit"/>
    <property type="evidence" value="ECO:0007669"/>
    <property type="project" value="TreeGrafter"/>
</dbReference>
<dbReference type="GO" id="GO:0019843">
    <property type="term" value="F:rRNA binding"/>
    <property type="evidence" value="ECO:0007669"/>
    <property type="project" value="UniProtKB-KW"/>
</dbReference>
<dbReference type="GO" id="GO:0003735">
    <property type="term" value="F:structural constituent of ribosome"/>
    <property type="evidence" value="ECO:0007669"/>
    <property type="project" value="TreeGrafter"/>
</dbReference>
<dbReference type="GO" id="GO:0042274">
    <property type="term" value="P:ribosomal small subunit biogenesis"/>
    <property type="evidence" value="ECO:0007669"/>
    <property type="project" value="TreeGrafter"/>
</dbReference>
<dbReference type="CDD" id="cd00165">
    <property type="entry name" value="S4"/>
    <property type="match status" value="1"/>
</dbReference>
<dbReference type="Gene3D" id="1.10.1050.10">
    <property type="entry name" value="Ribosomal Protein S4 Delta 41, Chain A, domain 1"/>
    <property type="match status" value="1"/>
</dbReference>
<dbReference type="Gene3D" id="3.10.290.10">
    <property type="entry name" value="RNA-binding S4 domain"/>
    <property type="match status" value="1"/>
</dbReference>
<dbReference type="InterPro" id="IPR022801">
    <property type="entry name" value="Ribosomal_uS4"/>
</dbReference>
<dbReference type="InterPro" id="IPR018079">
    <property type="entry name" value="Ribosomal_uS4_CS"/>
</dbReference>
<dbReference type="InterPro" id="IPR001912">
    <property type="entry name" value="Ribosomal_uS4_N"/>
</dbReference>
<dbReference type="InterPro" id="IPR002942">
    <property type="entry name" value="S4_RNA-bd"/>
</dbReference>
<dbReference type="InterPro" id="IPR036986">
    <property type="entry name" value="S4_RNA-bd_sf"/>
</dbReference>
<dbReference type="NCBIfam" id="NF003717">
    <property type="entry name" value="PRK05327.1"/>
    <property type="match status" value="1"/>
</dbReference>
<dbReference type="PANTHER" id="PTHR11831">
    <property type="entry name" value="30S 40S RIBOSOMAL PROTEIN"/>
    <property type="match status" value="1"/>
</dbReference>
<dbReference type="PANTHER" id="PTHR11831:SF4">
    <property type="entry name" value="SMALL RIBOSOMAL SUBUNIT PROTEIN US4M"/>
    <property type="match status" value="1"/>
</dbReference>
<dbReference type="Pfam" id="PF00163">
    <property type="entry name" value="Ribosomal_S4"/>
    <property type="match status" value="1"/>
</dbReference>
<dbReference type="Pfam" id="PF01479">
    <property type="entry name" value="S4"/>
    <property type="match status" value="1"/>
</dbReference>
<dbReference type="SMART" id="SM01390">
    <property type="entry name" value="Ribosomal_S4"/>
    <property type="match status" value="1"/>
</dbReference>
<dbReference type="SMART" id="SM00363">
    <property type="entry name" value="S4"/>
    <property type="match status" value="1"/>
</dbReference>
<dbReference type="SUPFAM" id="SSF55174">
    <property type="entry name" value="Alpha-L RNA-binding motif"/>
    <property type="match status" value="1"/>
</dbReference>
<dbReference type="PROSITE" id="PS00632">
    <property type="entry name" value="RIBOSOMAL_S4"/>
    <property type="match status" value="1"/>
</dbReference>
<dbReference type="PROSITE" id="PS50889">
    <property type="entry name" value="S4"/>
    <property type="match status" value="1"/>
</dbReference>
<name>RR4_HELSJ</name>
<reference key="1">
    <citation type="journal article" date="2006" name="BMC Biol.">
        <title>The complete plastid genome sequence of the parasitic green alga, Helicosporidium sp. is highly reduced and structured.</title>
        <authorList>
            <person name="de Koning A.P."/>
            <person name="Keeling P.J."/>
        </authorList>
    </citation>
    <scope>NUCLEOTIDE SEQUENCE [LARGE SCALE GENOMIC DNA]</scope>
</reference>
<gene>
    <name type="primary">rps4</name>
</gene>
<keyword id="KW-0934">Plastid</keyword>
<keyword id="KW-0687">Ribonucleoprotein</keyword>
<keyword id="KW-0689">Ribosomal protein</keyword>
<keyword id="KW-0694">RNA-binding</keyword>
<keyword id="KW-0699">rRNA-binding</keyword>
<evidence type="ECO:0000250" key="1"/>
<evidence type="ECO:0000255" key="2">
    <source>
        <dbReference type="PROSITE-ProRule" id="PRU00182"/>
    </source>
</evidence>
<evidence type="ECO:0000305" key="3"/>